<keyword id="KW-0002">3D-structure</keyword>
<keyword id="KW-0479">Metal-binding</keyword>
<keyword id="KW-1185">Reference proteome</keyword>
<keyword id="KW-0687">Ribonucleoprotein</keyword>
<keyword id="KW-0689">Ribosomal protein</keyword>
<keyword id="KW-0694">RNA-binding</keyword>
<keyword id="KW-0699">rRNA-binding</keyword>
<keyword id="KW-0862">Zinc</keyword>
<dbReference type="EMBL" id="M97678">
    <property type="protein sequence ID" value="AAA02901.1"/>
    <property type="molecule type" value="Unassigned_DNA"/>
</dbReference>
<dbReference type="EMBL" id="Z49782">
    <property type="protein sequence ID" value="CAA89878.1"/>
    <property type="molecule type" value="Genomic_DNA"/>
</dbReference>
<dbReference type="EMBL" id="AL009126">
    <property type="protein sequence ID" value="CAB15724.1"/>
    <property type="molecule type" value="Genomic_DNA"/>
</dbReference>
<dbReference type="PIR" id="S55431">
    <property type="entry name" value="S55431"/>
</dbReference>
<dbReference type="RefSeq" id="WP_003151132.1">
    <property type="nucleotide sequence ID" value="NZ_OZ025638.1"/>
</dbReference>
<dbReference type="PDB" id="3J9W">
    <property type="method" value="EM"/>
    <property type="resolution" value="3.90 A"/>
    <property type="chains" value="B3=1-66"/>
</dbReference>
<dbReference type="PDB" id="5NJT">
    <property type="method" value="EM"/>
    <property type="resolution" value="3.80 A"/>
    <property type="chains" value="y=1-64"/>
</dbReference>
<dbReference type="PDB" id="6HA1">
    <property type="method" value="EM"/>
    <property type="resolution" value="3.10 A"/>
    <property type="chains" value="6=1-63"/>
</dbReference>
<dbReference type="PDB" id="6HA8">
    <property type="method" value="EM"/>
    <property type="resolution" value="3.50 A"/>
    <property type="chains" value="6=1-66"/>
</dbReference>
<dbReference type="PDB" id="6HTQ">
    <property type="method" value="EM"/>
    <property type="resolution" value="4.50 A"/>
    <property type="chains" value="Z=1-63"/>
</dbReference>
<dbReference type="PDB" id="7O5B">
    <property type="method" value="EM"/>
    <property type="resolution" value="3.33 A"/>
    <property type="chains" value="6=1-66"/>
</dbReference>
<dbReference type="PDB" id="7QGU">
    <property type="method" value="EM"/>
    <property type="resolution" value="4.75 A"/>
    <property type="chains" value="3=1-66"/>
</dbReference>
<dbReference type="PDB" id="7QV1">
    <property type="method" value="EM"/>
    <property type="resolution" value="3.50 A"/>
    <property type="chains" value="6=1-66"/>
</dbReference>
<dbReference type="PDB" id="7QV2">
    <property type="method" value="EM"/>
    <property type="resolution" value="3.50 A"/>
    <property type="chains" value="6=1-66"/>
</dbReference>
<dbReference type="PDB" id="7QV3">
    <property type="method" value="EM"/>
    <property type="resolution" value="5.14 A"/>
    <property type="chains" value="6=1-66"/>
</dbReference>
<dbReference type="PDB" id="8QCQ">
    <property type="method" value="EM"/>
    <property type="resolution" value="2.30 A"/>
    <property type="chains" value="6=1-66"/>
</dbReference>
<dbReference type="PDB" id="8QPP">
    <property type="method" value="EM"/>
    <property type="resolution" value="3.40 A"/>
    <property type="chains" value="6=1-64"/>
</dbReference>
<dbReference type="PDB" id="8R55">
    <property type="method" value="EM"/>
    <property type="resolution" value="3.57 A"/>
    <property type="chains" value="6=1-64"/>
</dbReference>
<dbReference type="PDB" id="8S1P">
    <property type="method" value="EM"/>
    <property type="resolution" value="1.96 A"/>
    <property type="chains" value="6=1-66"/>
</dbReference>
<dbReference type="PDB" id="8S1U">
    <property type="method" value="EM"/>
    <property type="resolution" value="3.40 A"/>
    <property type="chains" value="6=1-66"/>
</dbReference>
<dbReference type="PDBsum" id="3J9W"/>
<dbReference type="PDBsum" id="5NJT"/>
<dbReference type="PDBsum" id="6HA1"/>
<dbReference type="PDBsum" id="6HA8"/>
<dbReference type="PDBsum" id="6HTQ"/>
<dbReference type="PDBsum" id="7O5B"/>
<dbReference type="PDBsum" id="7QGU"/>
<dbReference type="PDBsum" id="7QV1"/>
<dbReference type="PDBsum" id="7QV2"/>
<dbReference type="PDBsum" id="7QV3"/>
<dbReference type="PDBsum" id="8QCQ"/>
<dbReference type="PDBsum" id="8QPP"/>
<dbReference type="PDBsum" id="8R55"/>
<dbReference type="PDBsum" id="8S1P"/>
<dbReference type="PDBsum" id="8S1U"/>
<dbReference type="EMDB" id="EMD-0176"/>
<dbReference type="EMDB" id="EMD-0177"/>
<dbReference type="EMDB" id="EMD-0270"/>
<dbReference type="EMDB" id="EMD-12734"/>
<dbReference type="EMDB" id="EMD-14157"/>
<dbReference type="EMDB" id="EMD-14158"/>
<dbReference type="EMDB" id="EMD-14159"/>
<dbReference type="EMDB" id="EMD-18332"/>
<dbReference type="EMDB" id="EMD-19638"/>
<dbReference type="EMDB" id="EMD-19641"/>
<dbReference type="EMDB" id="EMD-3656"/>
<dbReference type="SMR" id="Q03223"/>
<dbReference type="FunCoup" id="Q03223">
    <property type="interactions" value="357"/>
</dbReference>
<dbReference type="STRING" id="224308.BSU37070"/>
<dbReference type="jPOST" id="Q03223"/>
<dbReference type="PaxDb" id="224308-BSU37070"/>
<dbReference type="EnsemblBacteria" id="CAB15724">
    <property type="protein sequence ID" value="CAB15724"/>
    <property type="gene ID" value="BSU_37070"/>
</dbReference>
<dbReference type="GeneID" id="93082567"/>
<dbReference type="GeneID" id="937034"/>
<dbReference type="KEGG" id="bsu:BSU37070"/>
<dbReference type="PATRIC" id="fig|224308.179.peg.4015"/>
<dbReference type="eggNOG" id="COG0254">
    <property type="taxonomic scope" value="Bacteria"/>
</dbReference>
<dbReference type="InParanoid" id="Q03223"/>
<dbReference type="OrthoDB" id="9803251at2"/>
<dbReference type="PhylomeDB" id="Q03223"/>
<dbReference type="BioCyc" id="BSUB:BSU37070-MONOMER"/>
<dbReference type="PRO" id="PR:Q03223"/>
<dbReference type="Proteomes" id="UP000001570">
    <property type="component" value="Chromosome"/>
</dbReference>
<dbReference type="GO" id="GO:1990904">
    <property type="term" value="C:ribonucleoprotein complex"/>
    <property type="evidence" value="ECO:0007669"/>
    <property type="project" value="UniProtKB-KW"/>
</dbReference>
<dbReference type="GO" id="GO:0005840">
    <property type="term" value="C:ribosome"/>
    <property type="evidence" value="ECO:0007669"/>
    <property type="project" value="UniProtKB-KW"/>
</dbReference>
<dbReference type="GO" id="GO:0046872">
    <property type="term" value="F:metal ion binding"/>
    <property type="evidence" value="ECO:0007669"/>
    <property type="project" value="UniProtKB-KW"/>
</dbReference>
<dbReference type="GO" id="GO:0019843">
    <property type="term" value="F:rRNA binding"/>
    <property type="evidence" value="ECO:0007669"/>
    <property type="project" value="UniProtKB-KW"/>
</dbReference>
<dbReference type="GO" id="GO:0003735">
    <property type="term" value="F:structural constituent of ribosome"/>
    <property type="evidence" value="ECO:0007669"/>
    <property type="project" value="InterPro"/>
</dbReference>
<dbReference type="GO" id="GO:0006412">
    <property type="term" value="P:translation"/>
    <property type="evidence" value="ECO:0007669"/>
    <property type="project" value="UniProtKB-UniRule"/>
</dbReference>
<dbReference type="Gene3D" id="4.10.830.30">
    <property type="entry name" value="Ribosomal protein L31"/>
    <property type="match status" value="1"/>
</dbReference>
<dbReference type="HAMAP" id="MF_00501">
    <property type="entry name" value="Ribosomal_bL31_1"/>
    <property type="match status" value="1"/>
</dbReference>
<dbReference type="InterPro" id="IPR034704">
    <property type="entry name" value="Ribosomal_bL28/bL31-like_sf"/>
</dbReference>
<dbReference type="InterPro" id="IPR002150">
    <property type="entry name" value="Ribosomal_bL31"/>
</dbReference>
<dbReference type="InterPro" id="IPR027491">
    <property type="entry name" value="Ribosomal_bL31_A"/>
</dbReference>
<dbReference type="InterPro" id="IPR042105">
    <property type="entry name" value="Ribosomal_bL31_sf"/>
</dbReference>
<dbReference type="NCBIfam" id="TIGR00105">
    <property type="entry name" value="L31"/>
    <property type="match status" value="1"/>
</dbReference>
<dbReference type="NCBIfam" id="NF000612">
    <property type="entry name" value="PRK00019.1"/>
    <property type="match status" value="1"/>
</dbReference>
<dbReference type="NCBIfam" id="NF001809">
    <property type="entry name" value="PRK00528.1"/>
    <property type="match status" value="1"/>
</dbReference>
<dbReference type="PANTHER" id="PTHR33280">
    <property type="entry name" value="50S RIBOSOMAL PROTEIN L31, CHLOROPLASTIC"/>
    <property type="match status" value="1"/>
</dbReference>
<dbReference type="PANTHER" id="PTHR33280:SF1">
    <property type="entry name" value="LARGE RIBOSOMAL SUBUNIT PROTEIN BL31C"/>
    <property type="match status" value="1"/>
</dbReference>
<dbReference type="Pfam" id="PF01197">
    <property type="entry name" value="Ribosomal_L31"/>
    <property type="match status" value="1"/>
</dbReference>
<dbReference type="PRINTS" id="PR01249">
    <property type="entry name" value="RIBOSOMALL31"/>
</dbReference>
<dbReference type="SUPFAM" id="SSF143800">
    <property type="entry name" value="L28p-like"/>
    <property type="match status" value="1"/>
</dbReference>
<dbReference type="PROSITE" id="PS01143">
    <property type="entry name" value="RIBOSOMAL_L31"/>
    <property type="match status" value="1"/>
</dbReference>
<feature type="chain" id="PRO_0000173079" description="Large ribosomal subunit protein bL31">
    <location>
        <begin position="1"/>
        <end position="66"/>
    </location>
</feature>
<feature type="binding site" evidence="5">
    <location>
        <position position="16"/>
    </location>
    <ligand>
        <name>Zn(2+)</name>
        <dbReference type="ChEBI" id="CHEBI:29105"/>
    </ligand>
</feature>
<feature type="binding site" evidence="5">
    <location>
        <position position="18"/>
    </location>
    <ligand>
        <name>Zn(2+)</name>
        <dbReference type="ChEBI" id="CHEBI:29105"/>
    </ligand>
</feature>
<feature type="binding site">
    <location>
        <position position="36"/>
    </location>
    <ligand>
        <name>Zn(2+)</name>
        <dbReference type="ChEBI" id="CHEBI:29105"/>
    </ligand>
</feature>
<feature type="binding site">
    <location>
        <position position="39"/>
    </location>
    <ligand>
        <name>Zn(2+)</name>
        <dbReference type="ChEBI" id="CHEBI:29105"/>
    </ligand>
</feature>
<feature type="mutagenesis site" description="The protein does not accumulate and cells grow very slowly." evidence="2">
    <original>C</original>
    <variation>A</variation>
    <location>
        <position position="36"/>
    </location>
</feature>
<feature type="mutagenesis site" description="The protein does not accumulate and cells grow very slowly." evidence="2">
    <original>C</original>
    <variation>A</variation>
    <location>
        <position position="39"/>
    </location>
</feature>
<feature type="turn" evidence="8">
    <location>
        <begin position="3"/>
        <end position="5"/>
    </location>
</feature>
<feature type="strand" evidence="8">
    <location>
        <begin position="10"/>
        <end position="16"/>
    </location>
</feature>
<feature type="strand" evidence="8">
    <location>
        <begin position="21"/>
        <end position="34"/>
    </location>
</feature>
<feature type="turn" evidence="8">
    <location>
        <begin position="37"/>
        <end position="39"/>
    </location>
</feature>
<feature type="turn" evidence="8">
    <location>
        <begin position="41"/>
        <end position="45"/>
    </location>
</feature>
<proteinExistence type="evidence at protein level"/>
<protein>
    <recommendedName>
        <fullName evidence="5">Large ribosomal subunit protein bL31</fullName>
    </recommendedName>
    <alternativeName>
        <fullName>50S ribosomal protein L31</fullName>
    </alternativeName>
</protein>
<accession>Q03223</accession>
<reference key="1">
    <citation type="journal article" date="1993" name="J. Bacteriol.">
        <title>Identification of a putative Bacillus subtilis rho gene.</title>
        <authorList>
            <person name="Quirk P.G."/>
            <person name="Dunkley E.A. Jr."/>
            <person name="Lee P."/>
            <person name="Krulwich T.A."/>
        </authorList>
    </citation>
    <scope>NUCLEOTIDE SEQUENCE [GENOMIC DNA]</scope>
    <source>
        <strain>BD99 / MS119</strain>
    </source>
</reference>
<reference key="2">
    <citation type="journal article" date="1997" name="Microbiology">
        <title>The Bacillus subtilis genome from gerBC (311 degrees) to licR (334 degrees).</title>
        <authorList>
            <person name="Presecan E."/>
            <person name="Moszer I."/>
            <person name="Boursier L."/>
            <person name="Cruz Ramos H."/>
            <person name="De La Fuente V."/>
            <person name="Hullo M.-F."/>
            <person name="Lelong C."/>
            <person name="Schleich S."/>
            <person name="Sekowska A."/>
            <person name="Song B.H."/>
            <person name="Villani G."/>
            <person name="Kunst F."/>
            <person name="Danchin A."/>
            <person name="Glaser P."/>
        </authorList>
    </citation>
    <scope>NUCLEOTIDE SEQUENCE [GENOMIC DNA]</scope>
    <source>
        <strain>168</strain>
    </source>
</reference>
<reference key="3">
    <citation type="journal article" date="1997" name="Nature">
        <title>The complete genome sequence of the Gram-positive bacterium Bacillus subtilis.</title>
        <authorList>
            <person name="Kunst F."/>
            <person name="Ogasawara N."/>
            <person name="Moszer I."/>
            <person name="Albertini A.M."/>
            <person name="Alloni G."/>
            <person name="Azevedo V."/>
            <person name="Bertero M.G."/>
            <person name="Bessieres P."/>
            <person name="Bolotin A."/>
            <person name="Borchert S."/>
            <person name="Borriss R."/>
            <person name="Boursier L."/>
            <person name="Brans A."/>
            <person name="Braun M."/>
            <person name="Brignell S.C."/>
            <person name="Bron S."/>
            <person name="Brouillet S."/>
            <person name="Bruschi C.V."/>
            <person name="Caldwell B."/>
            <person name="Capuano V."/>
            <person name="Carter N.M."/>
            <person name="Choi S.-K."/>
            <person name="Codani J.-J."/>
            <person name="Connerton I.F."/>
            <person name="Cummings N.J."/>
            <person name="Daniel R.A."/>
            <person name="Denizot F."/>
            <person name="Devine K.M."/>
            <person name="Duesterhoeft A."/>
            <person name="Ehrlich S.D."/>
            <person name="Emmerson P.T."/>
            <person name="Entian K.-D."/>
            <person name="Errington J."/>
            <person name="Fabret C."/>
            <person name="Ferrari E."/>
            <person name="Foulger D."/>
            <person name="Fritz C."/>
            <person name="Fujita M."/>
            <person name="Fujita Y."/>
            <person name="Fuma S."/>
            <person name="Galizzi A."/>
            <person name="Galleron N."/>
            <person name="Ghim S.-Y."/>
            <person name="Glaser P."/>
            <person name="Goffeau A."/>
            <person name="Golightly E.J."/>
            <person name="Grandi G."/>
            <person name="Guiseppi G."/>
            <person name="Guy B.J."/>
            <person name="Haga K."/>
            <person name="Haiech J."/>
            <person name="Harwood C.R."/>
            <person name="Henaut A."/>
            <person name="Hilbert H."/>
            <person name="Holsappel S."/>
            <person name="Hosono S."/>
            <person name="Hullo M.-F."/>
            <person name="Itaya M."/>
            <person name="Jones L.-M."/>
            <person name="Joris B."/>
            <person name="Karamata D."/>
            <person name="Kasahara Y."/>
            <person name="Klaerr-Blanchard M."/>
            <person name="Klein C."/>
            <person name="Kobayashi Y."/>
            <person name="Koetter P."/>
            <person name="Koningstein G."/>
            <person name="Krogh S."/>
            <person name="Kumano M."/>
            <person name="Kurita K."/>
            <person name="Lapidus A."/>
            <person name="Lardinois S."/>
            <person name="Lauber J."/>
            <person name="Lazarevic V."/>
            <person name="Lee S.-M."/>
            <person name="Levine A."/>
            <person name="Liu H."/>
            <person name="Masuda S."/>
            <person name="Mauel C."/>
            <person name="Medigue C."/>
            <person name="Medina N."/>
            <person name="Mellado R.P."/>
            <person name="Mizuno M."/>
            <person name="Moestl D."/>
            <person name="Nakai S."/>
            <person name="Noback M."/>
            <person name="Noone D."/>
            <person name="O'Reilly M."/>
            <person name="Ogawa K."/>
            <person name="Ogiwara A."/>
            <person name="Oudega B."/>
            <person name="Park S.-H."/>
            <person name="Parro V."/>
            <person name="Pohl T.M."/>
            <person name="Portetelle D."/>
            <person name="Porwollik S."/>
            <person name="Prescott A.M."/>
            <person name="Presecan E."/>
            <person name="Pujic P."/>
            <person name="Purnelle B."/>
            <person name="Rapoport G."/>
            <person name="Rey M."/>
            <person name="Reynolds S."/>
            <person name="Rieger M."/>
            <person name="Rivolta C."/>
            <person name="Rocha E."/>
            <person name="Roche B."/>
            <person name="Rose M."/>
            <person name="Sadaie Y."/>
            <person name="Sato T."/>
            <person name="Scanlan E."/>
            <person name="Schleich S."/>
            <person name="Schroeter R."/>
            <person name="Scoffone F."/>
            <person name="Sekiguchi J."/>
            <person name="Sekowska A."/>
            <person name="Seror S.J."/>
            <person name="Serror P."/>
            <person name="Shin B.-S."/>
            <person name="Soldo B."/>
            <person name="Sorokin A."/>
            <person name="Tacconi E."/>
            <person name="Takagi T."/>
            <person name="Takahashi H."/>
            <person name="Takemaru K."/>
            <person name="Takeuchi M."/>
            <person name="Tamakoshi A."/>
            <person name="Tanaka T."/>
            <person name="Terpstra P."/>
            <person name="Tognoni A."/>
            <person name="Tosato V."/>
            <person name="Uchiyama S."/>
            <person name="Vandenbol M."/>
            <person name="Vannier F."/>
            <person name="Vassarotti A."/>
            <person name="Viari A."/>
            <person name="Wambutt R."/>
            <person name="Wedler E."/>
            <person name="Wedler H."/>
            <person name="Weitzenegger T."/>
            <person name="Winters P."/>
            <person name="Wipat A."/>
            <person name="Yamamoto H."/>
            <person name="Yamane K."/>
            <person name="Yasumoto K."/>
            <person name="Yata K."/>
            <person name="Yoshida K."/>
            <person name="Yoshikawa H.-F."/>
            <person name="Zumstein E."/>
            <person name="Yoshikawa H."/>
            <person name="Danchin A."/>
        </authorList>
    </citation>
    <scope>NUCLEOTIDE SEQUENCE [LARGE SCALE GENOMIC DNA]</scope>
    <source>
        <strain>168</strain>
    </source>
</reference>
<reference key="4">
    <citation type="journal article" date="2004" name="Mol. Microbiol.">
        <title>Zinc is a key factor in controlling alternation of two types of L31 protein in the Bacillus subtilis ribosome.</title>
        <authorList>
            <person name="Nanamiya H."/>
            <person name="Akanuma G."/>
            <person name="Natori Y."/>
            <person name="Murayama R."/>
            <person name="Kosono S."/>
            <person name="Kudo T."/>
            <person name="Kobayashi K."/>
            <person name="Ogasawara N."/>
            <person name="Park S.-M."/>
            <person name="Ochi K."/>
            <person name="Kawamura F."/>
        </authorList>
    </citation>
    <scope>CHARACTERIZATION OF GROWTH-PHASE DEPENDENT EXPRESSION</scope>
    <scope>COFACTOR</scope>
    <scope>MUTAGENESIS OF CYS-36 AND CYS-39</scope>
    <source>
        <strain>168</strain>
    </source>
</reference>
<reference key="5">
    <citation type="journal article" date="2006" name="J. Bacteriol.">
        <title>Liberation of zinc-containing L31 (rpmE) from ribosomes by its paralogous gene product, ytiA, in Bacillus subtilis.</title>
        <authorList>
            <person name="Akanuma G."/>
            <person name="Nanamiya H."/>
            <person name="Natori Y."/>
            <person name="Nomura N."/>
            <person name="Kawamura F."/>
        </authorList>
    </citation>
    <scope>ALTERNATION OF L31 PARALOGS IN THE RIBOSOME</scope>
</reference>
<reference evidence="6 7" key="6">
    <citation type="journal article" date="2018" name="Proc. Natl. Acad. Sci. U.S.A.">
        <title>Structural basis for antibiotic resistance mediated by the Bacillus subtilis ABCF ATPase VmlR.</title>
        <authorList>
            <person name="Crowe-McAuliffe C."/>
            <person name="Graf M."/>
            <person name="Huter P."/>
            <person name="Takada H."/>
            <person name="Abdelshahid M."/>
            <person name="Novacek J."/>
            <person name="Murina V."/>
            <person name="Atkinson G.C."/>
            <person name="Hauryliuk V."/>
            <person name="Wilson D.N."/>
        </authorList>
    </citation>
    <scope>STRUCTURE BY ELECTRON MICROSCOPY (3.10 ANGSTROMS) OF 1-66 WITH AND WITHOUT VIRGINIAMYCIN M</scope>
    <scope>SUBUNIT</scope>
</reference>
<organism>
    <name type="scientific">Bacillus subtilis (strain 168)</name>
    <dbReference type="NCBI Taxonomy" id="224308"/>
    <lineage>
        <taxon>Bacteria</taxon>
        <taxon>Bacillati</taxon>
        <taxon>Bacillota</taxon>
        <taxon>Bacilli</taxon>
        <taxon>Bacillales</taxon>
        <taxon>Bacillaceae</taxon>
        <taxon>Bacillus</taxon>
    </lineage>
</organism>
<comment type="function">
    <text evidence="1">Binds the 23S rRNA.</text>
</comment>
<comment type="function">
    <text evidence="3">While neither of the L31 paralogs is essential, this protein seems to function as the main L31 protein. Has a lower affinity for 70S ribosomes than the non-zinc-containing paralog L31B (ytiA); is displaced by it to varying extents, even under zinc-replete conditions.</text>
</comment>
<comment type="cofactor">
    <cofactor evidence="2">
        <name>Zn(2+)</name>
        <dbReference type="ChEBI" id="CHEBI:29105"/>
    </cofactor>
    <text evidence="2">Binds 1 zinc ion per subunit. This zinc stabilizes the protein.</text>
</comment>
<comment type="subunit">
    <text evidence="2 4">Part of the 50S ribosomal subunit during exponential growth.</text>
</comment>
<comment type="induction">
    <text evidence="2">Only accumulates during exponential growth.</text>
</comment>
<comment type="similarity">
    <text evidence="5">Belongs to the bacterial ribosomal protein bL31 family. Type A subfamily.</text>
</comment>
<gene>
    <name type="primary">rpmE</name>
    <name type="ordered locus">BSU37070</name>
</gene>
<name>RL31_BACSU</name>
<evidence type="ECO:0000250" key="1"/>
<evidence type="ECO:0000269" key="2">
    <source>
    </source>
</evidence>
<evidence type="ECO:0000269" key="3">
    <source>
    </source>
</evidence>
<evidence type="ECO:0000269" key="4">
    <source>
    </source>
</evidence>
<evidence type="ECO:0000305" key="5"/>
<evidence type="ECO:0007744" key="6">
    <source>
        <dbReference type="PDB" id="6HA1"/>
    </source>
</evidence>
<evidence type="ECO:0007744" key="7">
    <source>
        <dbReference type="PDB" id="6HA8"/>
    </source>
</evidence>
<evidence type="ECO:0007829" key="8">
    <source>
        <dbReference type="PDB" id="8S1P"/>
    </source>
</evidence>
<sequence>MKAGIHPNFKKATVKCACGNEFETGSVKEEVRVEICSECHPFYTGRQKFASADGRVDRFNKKYGLK</sequence>